<accession>B9LKC5</accession>
<comment type="function">
    <text evidence="1">Major role in the synthesis of nucleoside triphosphates other than ATP. The ATP gamma phosphate is transferred to the NDP beta phosphate via a ping-pong mechanism, using a phosphorylated active-site intermediate.</text>
</comment>
<comment type="catalytic activity">
    <reaction evidence="1">
        <text>a 2'-deoxyribonucleoside 5'-diphosphate + ATP = a 2'-deoxyribonucleoside 5'-triphosphate + ADP</text>
        <dbReference type="Rhea" id="RHEA:44640"/>
        <dbReference type="ChEBI" id="CHEBI:30616"/>
        <dbReference type="ChEBI" id="CHEBI:61560"/>
        <dbReference type="ChEBI" id="CHEBI:73316"/>
        <dbReference type="ChEBI" id="CHEBI:456216"/>
        <dbReference type="EC" id="2.7.4.6"/>
    </reaction>
</comment>
<comment type="catalytic activity">
    <reaction evidence="1">
        <text>a ribonucleoside 5'-diphosphate + ATP = a ribonucleoside 5'-triphosphate + ADP</text>
        <dbReference type="Rhea" id="RHEA:18113"/>
        <dbReference type="ChEBI" id="CHEBI:30616"/>
        <dbReference type="ChEBI" id="CHEBI:57930"/>
        <dbReference type="ChEBI" id="CHEBI:61557"/>
        <dbReference type="ChEBI" id="CHEBI:456216"/>
        <dbReference type="EC" id="2.7.4.6"/>
    </reaction>
</comment>
<comment type="cofactor">
    <cofactor evidence="1">
        <name>Mg(2+)</name>
        <dbReference type="ChEBI" id="CHEBI:18420"/>
    </cofactor>
</comment>
<comment type="subunit">
    <text evidence="1">Homotetramer.</text>
</comment>
<comment type="subcellular location">
    <subcellularLocation>
        <location evidence="1">Cytoplasm</location>
    </subcellularLocation>
</comment>
<comment type="similarity">
    <text evidence="1">Belongs to the NDK family.</text>
</comment>
<organism>
    <name type="scientific">Chloroflexus aurantiacus (strain ATCC 29364 / DSM 637 / Y-400-fl)</name>
    <dbReference type="NCBI Taxonomy" id="480224"/>
    <lineage>
        <taxon>Bacteria</taxon>
        <taxon>Bacillati</taxon>
        <taxon>Chloroflexota</taxon>
        <taxon>Chloroflexia</taxon>
        <taxon>Chloroflexales</taxon>
        <taxon>Chloroflexineae</taxon>
        <taxon>Chloroflexaceae</taxon>
        <taxon>Chloroflexus</taxon>
    </lineage>
</organism>
<reference key="1">
    <citation type="submission" date="2009-01" db="EMBL/GenBank/DDBJ databases">
        <title>Complete sequence of Chloroflexus sp. Y-400-fl.</title>
        <authorList>
            <consortium name="US DOE Joint Genome Institute"/>
            <person name="Lucas S."/>
            <person name="Copeland A."/>
            <person name="Lapidus A."/>
            <person name="Glavina del Rio T."/>
            <person name="Dalin E."/>
            <person name="Tice H."/>
            <person name="Bruce D."/>
            <person name="Goodwin L."/>
            <person name="Pitluck S."/>
            <person name="Sims D."/>
            <person name="Kiss H."/>
            <person name="Brettin T."/>
            <person name="Detter J.C."/>
            <person name="Han C."/>
            <person name="Larimer F."/>
            <person name="Land M."/>
            <person name="Hauser L."/>
            <person name="Kyrpides N."/>
            <person name="Ovchinnikova G."/>
            <person name="Bryant D.A."/>
            <person name="Richardson P."/>
        </authorList>
    </citation>
    <scope>NUCLEOTIDE SEQUENCE [LARGE SCALE GENOMIC DNA]</scope>
    <source>
        <strain>ATCC 29364 / DSM 637 / Y-400-fl</strain>
    </source>
</reference>
<name>NDK_CHLSY</name>
<gene>
    <name evidence="1" type="primary">ndk</name>
    <name type="ordered locus">Chy400_0752</name>
</gene>
<feature type="chain" id="PRO_1000135246" description="Nucleoside diphosphate kinase">
    <location>
        <begin position="1"/>
        <end position="151"/>
    </location>
</feature>
<feature type="active site" description="Pros-phosphohistidine intermediate" evidence="1">
    <location>
        <position position="116"/>
    </location>
</feature>
<feature type="binding site" evidence="1">
    <location>
        <position position="9"/>
    </location>
    <ligand>
        <name>ATP</name>
        <dbReference type="ChEBI" id="CHEBI:30616"/>
    </ligand>
</feature>
<feature type="binding site" evidence="1">
    <location>
        <position position="57"/>
    </location>
    <ligand>
        <name>ATP</name>
        <dbReference type="ChEBI" id="CHEBI:30616"/>
    </ligand>
</feature>
<feature type="binding site" evidence="1">
    <location>
        <position position="86"/>
    </location>
    <ligand>
        <name>ATP</name>
        <dbReference type="ChEBI" id="CHEBI:30616"/>
    </ligand>
</feature>
<feature type="binding site" evidence="1">
    <location>
        <position position="92"/>
    </location>
    <ligand>
        <name>ATP</name>
        <dbReference type="ChEBI" id="CHEBI:30616"/>
    </ligand>
</feature>
<feature type="binding site" evidence="1">
    <location>
        <position position="103"/>
    </location>
    <ligand>
        <name>ATP</name>
        <dbReference type="ChEBI" id="CHEBI:30616"/>
    </ligand>
</feature>
<feature type="binding site" evidence="1">
    <location>
        <position position="113"/>
    </location>
    <ligand>
        <name>ATP</name>
        <dbReference type="ChEBI" id="CHEBI:30616"/>
    </ligand>
</feature>
<proteinExistence type="inferred from homology"/>
<sequence length="151" mass="16555">MERALLILKPDAVQRGLIGAIISRFEQRGLKFQGLKLMQVDEALARRHYAEHEGKSFFNGLVSYITSAPVVVAVVAGKPGTVELVRAMVGATNPAKAAPGTIRGDFGVDIGRNLIHASDSPESGERETAIFFQPHELIGEWNRALDNWIYE</sequence>
<protein>
    <recommendedName>
        <fullName evidence="1">Nucleoside diphosphate kinase</fullName>
        <shortName evidence="1">NDK</shortName>
        <shortName evidence="1">NDP kinase</shortName>
        <ecNumber evidence="1">2.7.4.6</ecNumber>
    </recommendedName>
    <alternativeName>
        <fullName evidence="1">Nucleoside-2-P kinase</fullName>
    </alternativeName>
</protein>
<keyword id="KW-0067">ATP-binding</keyword>
<keyword id="KW-0963">Cytoplasm</keyword>
<keyword id="KW-0418">Kinase</keyword>
<keyword id="KW-0460">Magnesium</keyword>
<keyword id="KW-0479">Metal-binding</keyword>
<keyword id="KW-0546">Nucleotide metabolism</keyword>
<keyword id="KW-0547">Nucleotide-binding</keyword>
<keyword id="KW-0597">Phosphoprotein</keyword>
<keyword id="KW-0808">Transferase</keyword>
<dbReference type="EC" id="2.7.4.6" evidence="1"/>
<dbReference type="EMBL" id="CP001364">
    <property type="protein sequence ID" value="ACM52182.1"/>
    <property type="molecule type" value="Genomic_DNA"/>
</dbReference>
<dbReference type="SMR" id="B9LKC5"/>
<dbReference type="KEGG" id="chl:Chy400_0752"/>
<dbReference type="HOGENOM" id="CLU_060216_6_3_0"/>
<dbReference type="OrthoDB" id="9801161at2"/>
<dbReference type="GO" id="GO:0005737">
    <property type="term" value="C:cytoplasm"/>
    <property type="evidence" value="ECO:0007669"/>
    <property type="project" value="UniProtKB-SubCell"/>
</dbReference>
<dbReference type="GO" id="GO:0005524">
    <property type="term" value="F:ATP binding"/>
    <property type="evidence" value="ECO:0007669"/>
    <property type="project" value="UniProtKB-UniRule"/>
</dbReference>
<dbReference type="GO" id="GO:0046872">
    <property type="term" value="F:metal ion binding"/>
    <property type="evidence" value="ECO:0007669"/>
    <property type="project" value="UniProtKB-KW"/>
</dbReference>
<dbReference type="GO" id="GO:0004550">
    <property type="term" value="F:nucleoside diphosphate kinase activity"/>
    <property type="evidence" value="ECO:0007669"/>
    <property type="project" value="UniProtKB-UniRule"/>
</dbReference>
<dbReference type="GO" id="GO:0006241">
    <property type="term" value="P:CTP biosynthetic process"/>
    <property type="evidence" value="ECO:0007669"/>
    <property type="project" value="UniProtKB-UniRule"/>
</dbReference>
<dbReference type="GO" id="GO:0006183">
    <property type="term" value="P:GTP biosynthetic process"/>
    <property type="evidence" value="ECO:0007669"/>
    <property type="project" value="UniProtKB-UniRule"/>
</dbReference>
<dbReference type="GO" id="GO:0006228">
    <property type="term" value="P:UTP biosynthetic process"/>
    <property type="evidence" value="ECO:0007669"/>
    <property type="project" value="UniProtKB-UniRule"/>
</dbReference>
<dbReference type="CDD" id="cd04413">
    <property type="entry name" value="NDPk_I"/>
    <property type="match status" value="1"/>
</dbReference>
<dbReference type="FunFam" id="3.30.70.141:FF:000003">
    <property type="entry name" value="Nucleoside diphosphate kinase"/>
    <property type="match status" value="1"/>
</dbReference>
<dbReference type="Gene3D" id="3.30.70.141">
    <property type="entry name" value="Nucleoside diphosphate kinase-like domain"/>
    <property type="match status" value="1"/>
</dbReference>
<dbReference type="HAMAP" id="MF_00451">
    <property type="entry name" value="NDP_kinase"/>
    <property type="match status" value="1"/>
</dbReference>
<dbReference type="InterPro" id="IPR034907">
    <property type="entry name" value="NDK-like_dom"/>
</dbReference>
<dbReference type="InterPro" id="IPR036850">
    <property type="entry name" value="NDK-like_dom_sf"/>
</dbReference>
<dbReference type="InterPro" id="IPR001564">
    <property type="entry name" value="Nucleoside_diP_kinase"/>
</dbReference>
<dbReference type="InterPro" id="IPR023005">
    <property type="entry name" value="Nucleoside_diP_kinase_AS"/>
</dbReference>
<dbReference type="NCBIfam" id="NF001908">
    <property type="entry name" value="PRK00668.1"/>
    <property type="match status" value="1"/>
</dbReference>
<dbReference type="PANTHER" id="PTHR11349">
    <property type="entry name" value="NUCLEOSIDE DIPHOSPHATE KINASE"/>
    <property type="match status" value="1"/>
</dbReference>
<dbReference type="Pfam" id="PF00334">
    <property type="entry name" value="NDK"/>
    <property type="match status" value="1"/>
</dbReference>
<dbReference type="PRINTS" id="PR01243">
    <property type="entry name" value="NUCDPKINASE"/>
</dbReference>
<dbReference type="SMART" id="SM00562">
    <property type="entry name" value="NDK"/>
    <property type="match status" value="1"/>
</dbReference>
<dbReference type="SUPFAM" id="SSF54919">
    <property type="entry name" value="Nucleoside diphosphate kinase, NDK"/>
    <property type="match status" value="1"/>
</dbReference>
<dbReference type="PROSITE" id="PS00469">
    <property type="entry name" value="NDPK"/>
    <property type="match status" value="1"/>
</dbReference>
<dbReference type="PROSITE" id="PS51374">
    <property type="entry name" value="NDPK_LIKE"/>
    <property type="match status" value="1"/>
</dbReference>
<evidence type="ECO:0000255" key="1">
    <source>
        <dbReference type="HAMAP-Rule" id="MF_00451"/>
    </source>
</evidence>